<gene>
    <name type="ordered locus">SA1452</name>
</gene>
<name>Y1452_STAAN</name>
<protein>
    <recommendedName>
        <fullName>UPF0337 protein SA1452</fullName>
    </recommendedName>
</protein>
<comment type="similarity">
    <text evidence="2">Belongs to the UPF0337 (CsbD) family.</text>
</comment>
<sequence>MADESKFDQFKGNVKETVGNVTDNKELEKEGQQDKATGKAKEVVENAKNKITDAIDKLKK</sequence>
<dbReference type="EMBL" id="BA000018">
    <property type="protein sequence ID" value="BAB42717.1"/>
    <property type="molecule type" value="Genomic_DNA"/>
</dbReference>
<dbReference type="PIR" id="H89944">
    <property type="entry name" value="H89944"/>
</dbReference>
<dbReference type="RefSeq" id="WP_000752909.1">
    <property type="nucleotide sequence ID" value="NC_002745.2"/>
</dbReference>
<dbReference type="SMR" id="Q7A593"/>
<dbReference type="EnsemblBacteria" id="BAB42717">
    <property type="protein sequence ID" value="BAB42717"/>
    <property type="gene ID" value="BAB42717"/>
</dbReference>
<dbReference type="KEGG" id="sau:SA1452"/>
<dbReference type="HOGENOM" id="CLU_135567_0_3_9"/>
<dbReference type="Gene3D" id="1.10.1470.10">
    <property type="entry name" value="YjbJ"/>
    <property type="match status" value="1"/>
</dbReference>
<dbReference type="InterPro" id="IPR008462">
    <property type="entry name" value="CsbD"/>
</dbReference>
<dbReference type="InterPro" id="IPR050423">
    <property type="entry name" value="UPF0337_stress_rsp"/>
</dbReference>
<dbReference type="InterPro" id="IPR036629">
    <property type="entry name" value="YjbJ_sf"/>
</dbReference>
<dbReference type="PANTHER" id="PTHR34977">
    <property type="entry name" value="UPF0337 PROTEIN YJBJ"/>
    <property type="match status" value="1"/>
</dbReference>
<dbReference type="PANTHER" id="PTHR34977:SF1">
    <property type="entry name" value="UPF0337 PROTEIN YJBJ"/>
    <property type="match status" value="1"/>
</dbReference>
<dbReference type="Pfam" id="PF05532">
    <property type="entry name" value="CsbD"/>
    <property type="match status" value="1"/>
</dbReference>
<dbReference type="SUPFAM" id="SSF69047">
    <property type="entry name" value="Hypothetical protein YjbJ"/>
    <property type="match status" value="1"/>
</dbReference>
<organism>
    <name type="scientific">Staphylococcus aureus (strain N315)</name>
    <dbReference type="NCBI Taxonomy" id="158879"/>
    <lineage>
        <taxon>Bacteria</taxon>
        <taxon>Bacillati</taxon>
        <taxon>Bacillota</taxon>
        <taxon>Bacilli</taxon>
        <taxon>Bacillales</taxon>
        <taxon>Staphylococcaceae</taxon>
        <taxon>Staphylococcus</taxon>
    </lineage>
</organism>
<feature type="chain" id="PRO_0000210034" description="UPF0337 protein SA1452">
    <location>
        <begin position="1"/>
        <end position="60"/>
    </location>
</feature>
<feature type="region of interest" description="Disordered" evidence="1">
    <location>
        <begin position="18"/>
        <end position="41"/>
    </location>
</feature>
<feature type="compositionally biased region" description="Basic and acidic residues" evidence="1">
    <location>
        <begin position="23"/>
        <end position="41"/>
    </location>
</feature>
<reference key="1">
    <citation type="journal article" date="2001" name="Lancet">
        <title>Whole genome sequencing of meticillin-resistant Staphylococcus aureus.</title>
        <authorList>
            <person name="Kuroda M."/>
            <person name="Ohta T."/>
            <person name="Uchiyama I."/>
            <person name="Baba T."/>
            <person name="Yuzawa H."/>
            <person name="Kobayashi I."/>
            <person name="Cui L."/>
            <person name="Oguchi A."/>
            <person name="Aoki K."/>
            <person name="Nagai Y."/>
            <person name="Lian J.-Q."/>
            <person name="Ito T."/>
            <person name="Kanamori M."/>
            <person name="Matsumaru H."/>
            <person name="Maruyama A."/>
            <person name="Murakami H."/>
            <person name="Hosoyama A."/>
            <person name="Mizutani-Ui Y."/>
            <person name="Takahashi N.K."/>
            <person name="Sawano T."/>
            <person name="Inoue R."/>
            <person name="Kaito C."/>
            <person name="Sekimizu K."/>
            <person name="Hirakawa H."/>
            <person name="Kuhara S."/>
            <person name="Goto S."/>
            <person name="Yabuzaki J."/>
            <person name="Kanehisa M."/>
            <person name="Yamashita A."/>
            <person name="Oshima K."/>
            <person name="Furuya K."/>
            <person name="Yoshino C."/>
            <person name="Shiba T."/>
            <person name="Hattori M."/>
            <person name="Ogasawara N."/>
            <person name="Hayashi H."/>
            <person name="Hiramatsu K."/>
        </authorList>
    </citation>
    <scope>NUCLEOTIDE SEQUENCE [LARGE SCALE GENOMIC DNA]</scope>
    <source>
        <strain>N315</strain>
    </source>
</reference>
<reference key="2">
    <citation type="submission" date="2007-10" db="UniProtKB">
        <title>Shotgun proteomic analysis of total and membrane protein extracts of S. aureus strain N315.</title>
        <authorList>
            <person name="Vaezzadeh A.R."/>
            <person name="Deshusses J."/>
            <person name="Lescuyer P."/>
            <person name="Hochstrasser D.F."/>
        </authorList>
    </citation>
    <scope>IDENTIFICATION BY MASS SPECTROMETRY [LARGE SCALE ANALYSIS]</scope>
    <source>
        <strain>N315</strain>
    </source>
</reference>
<proteinExistence type="evidence at protein level"/>
<accession>Q7A593</accession>
<evidence type="ECO:0000256" key="1">
    <source>
        <dbReference type="SAM" id="MobiDB-lite"/>
    </source>
</evidence>
<evidence type="ECO:0000305" key="2"/>